<name>AROB_PROM9</name>
<accession>Q31BK2</accession>
<reference key="1">
    <citation type="journal article" date="2006" name="Science">
        <title>Genomic islands and the ecology and evolution of Prochlorococcus.</title>
        <authorList>
            <person name="Coleman M.L."/>
            <person name="Sullivan M.B."/>
            <person name="Martiny A.C."/>
            <person name="Steglich C."/>
            <person name="Barry K."/>
            <person name="Delong E.F."/>
            <person name="Chisholm S.W."/>
        </authorList>
    </citation>
    <scope>NUCLEOTIDE SEQUENCE [LARGE SCALE GENOMIC DNA]</scope>
    <source>
        <strain>MIT 9312</strain>
    </source>
</reference>
<dbReference type="EC" id="4.2.3.4" evidence="1"/>
<dbReference type="EMBL" id="CP000111">
    <property type="protein sequence ID" value="ABB49743.1"/>
    <property type="molecule type" value="Genomic_DNA"/>
</dbReference>
<dbReference type="RefSeq" id="WP_011376238.1">
    <property type="nucleotide sequence ID" value="NC_007577.1"/>
</dbReference>
<dbReference type="SMR" id="Q31BK2"/>
<dbReference type="STRING" id="74546.PMT9312_0682"/>
<dbReference type="KEGG" id="pmi:PMT9312_0682"/>
<dbReference type="eggNOG" id="COG0337">
    <property type="taxonomic scope" value="Bacteria"/>
</dbReference>
<dbReference type="HOGENOM" id="CLU_001201_0_2_3"/>
<dbReference type="OrthoDB" id="9806583at2"/>
<dbReference type="UniPathway" id="UPA00053">
    <property type="reaction ID" value="UER00085"/>
</dbReference>
<dbReference type="Proteomes" id="UP000002715">
    <property type="component" value="Chromosome"/>
</dbReference>
<dbReference type="GO" id="GO:0005737">
    <property type="term" value="C:cytoplasm"/>
    <property type="evidence" value="ECO:0007669"/>
    <property type="project" value="UniProtKB-SubCell"/>
</dbReference>
<dbReference type="GO" id="GO:0003856">
    <property type="term" value="F:3-dehydroquinate synthase activity"/>
    <property type="evidence" value="ECO:0007669"/>
    <property type="project" value="UniProtKB-UniRule"/>
</dbReference>
<dbReference type="GO" id="GO:0046872">
    <property type="term" value="F:metal ion binding"/>
    <property type="evidence" value="ECO:0007669"/>
    <property type="project" value="UniProtKB-KW"/>
</dbReference>
<dbReference type="GO" id="GO:0000166">
    <property type="term" value="F:nucleotide binding"/>
    <property type="evidence" value="ECO:0007669"/>
    <property type="project" value="UniProtKB-KW"/>
</dbReference>
<dbReference type="GO" id="GO:0008652">
    <property type="term" value="P:amino acid biosynthetic process"/>
    <property type="evidence" value="ECO:0007669"/>
    <property type="project" value="UniProtKB-KW"/>
</dbReference>
<dbReference type="GO" id="GO:0009073">
    <property type="term" value="P:aromatic amino acid family biosynthetic process"/>
    <property type="evidence" value="ECO:0007669"/>
    <property type="project" value="UniProtKB-KW"/>
</dbReference>
<dbReference type="GO" id="GO:0009423">
    <property type="term" value="P:chorismate biosynthetic process"/>
    <property type="evidence" value="ECO:0007669"/>
    <property type="project" value="UniProtKB-UniRule"/>
</dbReference>
<dbReference type="CDD" id="cd08195">
    <property type="entry name" value="DHQS"/>
    <property type="match status" value="1"/>
</dbReference>
<dbReference type="FunFam" id="3.40.50.1970:FF:000001">
    <property type="entry name" value="3-dehydroquinate synthase"/>
    <property type="match status" value="1"/>
</dbReference>
<dbReference type="Gene3D" id="3.40.50.1970">
    <property type="match status" value="1"/>
</dbReference>
<dbReference type="Gene3D" id="1.20.1090.10">
    <property type="entry name" value="Dehydroquinate synthase-like - alpha domain"/>
    <property type="match status" value="1"/>
</dbReference>
<dbReference type="HAMAP" id="MF_00110">
    <property type="entry name" value="DHQ_synthase"/>
    <property type="match status" value="1"/>
</dbReference>
<dbReference type="InterPro" id="IPR050071">
    <property type="entry name" value="Dehydroquinate_synthase"/>
</dbReference>
<dbReference type="InterPro" id="IPR016037">
    <property type="entry name" value="DHQ_synth_AroB"/>
</dbReference>
<dbReference type="InterPro" id="IPR030963">
    <property type="entry name" value="DHQ_synth_fam"/>
</dbReference>
<dbReference type="InterPro" id="IPR030960">
    <property type="entry name" value="DHQS/DOIS_N"/>
</dbReference>
<dbReference type="InterPro" id="IPR056179">
    <property type="entry name" value="DHQS_C"/>
</dbReference>
<dbReference type="NCBIfam" id="TIGR01357">
    <property type="entry name" value="aroB"/>
    <property type="match status" value="1"/>
</dbReference>
<dbReference type="PANTHER" id="PTHR43622">
    <property type="entry name" value="3-DEHYDROQUINATE SYNTHASE"/>
    <property type="match status" value="1"/>
</dbReference>
<dbReference type="PANTHER" id="PTHR43622:SF7">
    <property type="entry name" value="3-DEHYDROQUINATE SYNTHASE, CHLOROPLASTIC"/>
    <property type="match status" value="1"/>
</dbReference>
<dbReference type="Pfam" id="PF01761">
    <property type="entry name" value="DHQ_synthase"/>
    <property type="match status" value="1"/>
</dbReference>
<dbReference type="Pfam" id="PF24621">
    <property type="entry name" value="DHQS_C"/>
    <property type="match status" value="1"/>
</dbReference>
<dbReference type="PIRSF" id="PIRSF001455">
    <property type="entry name" value="DHQ_synth"/>
    <property type="match status" value="1"/>
</dbReference>
<dbReference type="SUPFAM" id="SSF56796">
    <property type="entry name" value="Dehydroquinate synthase-like"/>
    <property type="match status" value="1"/>
</dbReference>
<feature type="chain" id="PRO_0000231110" description="3-dehydroquinate synthase">
    <location>
        <begin position="1"/>
        <end position="363"/>
    </location>
</feature>
<feature type="binding site" evidence="1">
    <location>
        <begin position="134"/>
        <end position="135"/>
    </location>
    <ligand>
        <name>NAD(+)</name>
        <dbReference type="ChEBI" id="CHEBI:57540"/>
    </ligand>
</feature>
<feature type="binding site" evidence="1">
    <location>
        <position position="147"/>
    </location>
    <ligand>
        <name>NAD(+)</name>
        <dbReference type="ChEBI" id="CHEBI:57540"/>
    </ligand>
</feature>
<feature type="binding site" evidence="1">
    <location>
        <position position="156"/>
    </location>
    <ligand>
        <name>NAD(+)</name>
        <dbReference type="ChEBI" id="CHEBI:57540"/>
    </ligand>
</feature>
<feature type="binding site" evidence="1">
    <location>
        <position position="189"/>
    </location>
    <ligand>
        <name>Zn(2+)</name>
        <dbReference type="ChEBI" id="CHEBI:29105"/>
    </ligand>
</feature>
<feature type="binding site" evidence="1">
    <location>
        <position position="254"/>
    </location>
    <ligand>
        <name>Zn(2+)</name>
        <dbReference type="ChEBI" id="CHEBI:29105"/>
    </ligand>
</feature>
<feature type="binding site" evidence="1">
    <location>
        <position position="271"/>
    </location>
    <ligand>
        <name>Zn(2+)</name>
        <dbReference type="ChEBI" id="CHEBI:29105"/>
    </ligand>
</feature>
<comment type="function">
    <text evidence="1">Catalyzes the conversion of 3-deoxy-D-arabino-heptulosonate 7-phosphate (DAHP) to dehydroquinate (DHQ).</text>
</comment>
<comment type="catalytic activity">
    <reaction evidence="1">
        <text>7-phospho-2-dehydro-3-deoxy-D-arabino-heptonate = 3-dehydroquinate + phosphate</text>
        <dbReference type="Rhea" id="RHEA:21968"/>
        <dbReference type="ChEBI" id="CHEBI:32364"/>
        <dbReference type="ChEBI" id="CHEBI:43474"/>
        <dbReference type="ChEBI" id="CHEBI:58394"/>
        <dbReference type="EC" id="4.2.3.4"/>
    </reaction>
</comment>
<comment type="cofactor">
    <cofactor evidence="1">
        <name>Co(2+)</name>
        <dbReference type="ChEBI" id="CHEBI:48828"/>
    </cofactor>
    <cofactor evidence="1">
        <name>Zn(2+)</name>
        <dbReference type="ChEBI" id="CHEBI:29105"/>
    </cofactor>
    <text evidence="1">Binds 1 divalent metal cation per subunit. Can use either Co(2+) or Zn(2+).</text>
</comment>
<comment type="cofactor">
    <cofactor evidence="1">
        <name>NAD(+)</name>
        <dbReference type="ChEBI" id="CHEBI:57540"/>
    </cofactor>
</comment>
<comment type="pathway">
    <text evidence="1">Metabolic intermediate biosynthesis; chorismate biosynthesis; chorismate from D-erythrose 4-phosphate and phosphoenolpyruvate: step 2/7.</text>
</comment>
<comment type="subcellular location">
    <subcellularLocation>
        <location evidence="1">Cytoplasm</location>
    </subcellularLocation>
</comment>
<comment type="similarity">
    <text evidence="1">Belongs to the sugar phosphate cyclases superfamily. Dehydroquinate synthase family.</text>
</comment>
<protein>
    <recommendedName>
        <fullName evidence="1">3-dehydroquinate synthase</fullName>
        <shortName evidence="1">DHQS</shortName>
        <ecNumber evidence="1">4.2.3.4</ecNumber>
    </recommendedName>
</protein>
<gene>
    <name evidence="1" type="primary">aroB</name>
    <name type="ordered locus">PMT9312_0682</name>
</gene>
<evidence type="ECO:0000255" key="1">
    <source>
        <dbReference type="HAMAP-Rule" id="MF_00110"/>
    </source>
</evidence>
<keyword id="KW-0028">Amino-acid biosynthesis</keyword>
<keyword id="KW-0057">Aromatic amino acid biosynthesis</keyword>
<keyword id="KW-0170">Cobalt</keyword>
<keyword id="KW-0963">Cytoplasm</keyword>
<keyword id="KW-0456">Lyase</keyword>
<keyword id="KW-0479">Metal-binding</keyword>
<keyword id="KW-0520">NAD</keyword>
<keyword id="KW-0547">Nucleotide-binding</keyword>
<keyword id="KW-0862">Zinc</keyword>
<sequence length="363" mass="40806">MNKRKILVPLGNKSYEVTIEAGILNNISEELLKIGITKNRKILVISNEEISNFYGEKFLNDLKDNKFQVQMFLIKAGESYKNLKTLSEIYDVAFEFGLDRNSIIIALGGGIVGDVSGFAAATWLRGIEYIQIPTTLLSMVDSSVGGKTGVNHPKGKNLIGAFNQPKAVFIDPETLKSLPKREFSAGMAEVIKYGVIRDKELFEYLEIEKNKNELINLKNEYLIKIINSSIKTKSYIVSQDEHENGVRAILNYGHSFGHVIENLCGYGKFLHGEAISIGMNIAGEIAIDKGLWSKEELERQKNLLKSYDLPTEIPKINKEDVLTILMGDKKVRNGKMRFILPKEIGVVDIYDDVEDALFLKFFS</sequence>
<organism>
    <name type="scientific">Prochlorococcus marinus (strain MIT 9312)</name>
    <dbReference type="NCBI Taxonomy" id="74546"/>
    <lineage>
        <taxon>Bacteria</taxon>
        <taxon>Bacillati</taxon>
        <taxon>Cyanobacteriota</taxon>
        <taxon>Cyanophyceae</taxon>
        <taxon>Synechococcales</taxon>
        <taxon>Prochlorococcaceae</taxon>
        <taxon>Prochlorococcus</taxon>
    </lineage>
</organism>
<proteinExistence type="inferred from homology"/>